<accession>B1MP34</accession>
<dbReference type="EC" id="2.7.8.13" evidence="1"/>
<dbReference type="EMBL" id="CU458896">
    <property type="protein sequence ID" value="CAM62085.1"/>
    <property type="molecule type" value="Genomic_DNA"/>
</dbReference>
<dbReference type="RefSeq" id="WP_005060906.1">
    <property type="nucleotide sequence ID" value="NZ_MLCG01000002.1"/>
</dbReference>
<dbReference type="SMR" id="B1MP34"/>
<dbReference type="GeneID" id="93378941"/>
<dbReference type="KEGG" id="mab:MAB_2003"/>
<dbReference type="UniPathway" id="UPA00219"/>
<dbReference type="Proteomes" id="UP000007137">
    <property type="component" value="Chromosome"/>
</dbReference>
<dbReference type="GO" id="GO:0005886">
    <property type="term" value="C:plasma membrane"/>
    <property type="evidence" value="ECO:0007669"/>
    <property type="project" value="UniProtKB-SubCell"/>
</dbReference>
<dbReference type="GO" id="GO:0046872">
    <property type="term" value="F:metal ion binding"/>
    <property type="evidence" value="ECO:0007669"/>
    <property type="project" value="UniProtKB-KW"/>
</dbReference>
<dbReference type="GO" id="GO:0008963">
    <property type="term" value="F:phospho-N-acetylmuramoyl-pentapeptide-transferase activity"/>
    <property type="evidence" value="ECO:0007669"/>
    <property type="project" value="UniProtKB-UniRule"/>
</dbReference>
<dbReference type="GO" id="GO:0051992">
    <property type="term" value="F:UDP-N-acetylmuramoyl-L-alanyl-D-glutamyl-meso-2,6-diaminopimelyl-D-alanyl-D-alanine:undecaprenyl-phosphate transferase activity"/>
    <property type="evidence" value="ECO:0007669"/>
    <property type="project" value="RHEA"/>
</dbReference>
<dbReference type="GO" id="GO:0051301">
    <property type="term" value="P:cell division"/>
    <property type="evidence" value="ECO:0007669"/>
    <property type="project" value="UniProtKB-KW"/>
</dbReference>
<dbReference type="GO" id="GO:0071555">
    <property type="term" value="P:cell wall organization"/>
    <property type="evidence" value="ECO:0007669"/>
    <property type="project" value="UniProtKB-KW"/>
</dbReference>
<dbReference type="GO" id="GO:0009252">
    <property type="term" value="P:peptidoglycan biosynthetic process"/>
    <property type="evidence" value="ECO:0007669"/>
    <property type="project" value="UniProtKB-UniRule"/>
</dbReference>
<dbReference type="GO" id="GO:0008360">
    <property type="term" value="P:regulation of cell shape"/>
    <property type="evidence" value="ECO:0007669"/>
    <property type="project" value="UniProtKB-KW"/>
</dbReference>
<dbReference type="CDD" id="cd06852">
    <property type="entry name" value="GT_MraY"/>
    <property type="match status" value="1"/>
</dbReference>
<dbReference type="HAMAP" id="MF_00038">
    <property type="entry name" value="MraY"/>
    <property type="match status" value="1"/>
</dbReference>
<dbReference type="InterPro" id="IPR000715">
    <property type="entry name" value="Glycosyl_transferase_4"/>
</dbReference>
<dbReference type="InterPro" id="IPR003524">
    <property type="entry name" value="PNAcMuramoyl-5peptid_Trfase"/>
</dbReference>
<dbReference type="InterPro" id="IPR018480">
    <property type="entry name" value="PNAcMuramoyl-5peptid_Trfase_CS"/>
</dbReference>
<dbReference type="NCBIfam" id="TIGR00445">
    <property type="entry name" value="mraY"/>
    <property type="match status" value="1"/>
</dbReference>
<dbReference type="PANTHER" id="PTHR22926">
    <property type="entry name" value="PHOSPHO-N-ACETYLMURAMOYL-PENTAPEPTIDE-TRANSFERASE"/>
    <property type="match status" value="1"/>
</dbReference>
<dbReference type="PANTHER" id="PTHR22926:SF5">
    <property type="entry name" value="PHOSPHO-N-ACETYLMURAMOYL-PENTAPEPTIDE-TRANSFERASE HOMOLOG"/>
    <property type="match status" value="1"/>
</dbReference>
<dbReference type="Pfam" id="PF00953">
    <property type="entry name" value="Glycos_transf_4"/>
    <property type="match status" value="1"/>
</dbReference>
<dbReference type="Pfam" id="PF10555">
    <property type="entry name" value="MraY_sig1"/>
    <property type="match status" value="1"/>
</dbReference>
<dbReference type="PROSITE" id="PS01347">
    <property type="entry name" value="MRAY_1"/>
    <property type="match status" value="1"/>
</dbReference>
<dbReference type="PROSITE" id="PS01348">
    <property type="entry name" value="MRAY_2"/>
    <property type="match status" value="1"/>
</dbReference>
<feature type="chain" id="PRO_1000090646" description="Phospho-N-acetylmuramoyl-pentapeptide-transferase">
    <location>
        <begin position="1"/>
        <end position="359"/>
    </location>
</feature>
<feature type="transmembrane region" description="Helical" evidence="1">
    <location>
        <begin position="3"/>
        <end position="23"/>
    </location>
</feature>
<feature type="transmembrane region" description="Helical" evidence="1">
    <location>
        <begin position="55"/>
        <end position="75"/>
    </location>
</feature>
<feature type="transmembrane region" description="Helical" evidence="1">
    <location>
        <begin position="84"/>
        <end position="104"/>
    </location>
</feature>
<feature type="transmembrane region" description="Helical" evidence="1">
    <location>
        <begin position="117"/>
        <end position="137"/>
    </location>
</feature>
<feature type="transmembrane region" description="Helical" evidence="1">
    <location>
        <begin position="156"/>
        <end position="176"/>
    </location>
</feature>
<feature type="transmembrane region" description="Helical" evidence="1">
    <location>
        <begin position="187"/>
        <end position="207"/>
    </location>
</feature>
<feature type="transmembrane region" description="Helical" evidence="1">
    <location>
        <begin position="231"/>
        <end position="251"/>
    </location>
</feature>
<feature type="transmembrane region" description="Helical" evidence="1">
    <location>
        <begin position="255"/>
        <end position="275"/>
    </location>
</feature>
<feature type="transmembrane region" description="Helical" evidence="1">
    <location>
        <begin position="280"/>
        <end position="300"/>
    </location>
</feature>
<feature type="transmembrane region" description="Helical" evidence="1">
    <location>
        <begin position="334"/>
        <end position="354"/>
    </location>
</feature>
<reference key="1">
    <citation type="journal article" date="2009" name="PLoS ONE">
        <title>Non mycobacterial virulence genes in the genome of the emerging pathogen Mycobacterium abscessus.</title>
        <authorList>
            <person name="Ripoll F."/>
            <person name="Pasek S."/>
            <person name="Schenowitz C."/>
            <person name="Dossat C."/>
            <person name="Barbe V."/>
            <person name="Rottman M."/>
            <person name="Macheras E."/>
            <person name="Heym B."/>
            <person name="Herrmann J.L."/>
            <person name="Daffe M."/>
            <person name="Brosch R."/>
            <person name="Risler J.L."/>
            <person name="Gaillard J.L."/>
        </authorList>
    </citation>
    <scope>NUCLEOTIDE SEQUENCE [LARGE SCALE GENOMIC DNA]</scope>
    <source>
        <strain>ATCC 19977 / DSM 44196 / CCUG 20993 / CIP 104536 / JCM 13569 / NCTC 13031 / TMC 1543 / L948</strain>
    </source>
</reference>
<evidence type="ECO:0000255" key="1">
    <source>
        <dbReference type="HAMAP-Rule" id="MF_00038"/>
    </source>
</evidence>
<protein>
    <recommendedName>
        <fullName evidence="1">Phospho-N-acetylmuramoyl-pentapeptide-transferase</fullName>
        <ecNumber evidence="1">2.7.8.13</ecNumber>
    </recommendedName>
    <alternativeName>
        <fullName evidence="1">UDP-MurNAc-pentapeptide phosphotransferase</fullName>
    </alternativeName>
</protein>
<keyword id="KW-0131">Cell cycle</keyword>
<keyword id="KW-0132">Cell division</keyword>
<keyword id="KW-1003">Cell membrane</keyword>
<keyword id="KW-0133">Cell shape</keyword>
<keyword id="KW-0961">Cell wall biogenesis/degradation</keyword>
<keyword id="KW-0460">Magnesium</keyword>
<keyword id="KW-0472">Membrane</keyword>
<keyword id="KW-0479">Metal-binding</keyword>
<keyword id="KW-0573">Peptidoglycan synthesis</keyword>
<keyword id="KW-1185">Reference proteome</keyword>
<keyword id="KW-0808">Transferase</keyword>
<keyword id="KW-0812">Transmembrane</keyword>
<keyword id="KW-1133">Transmembrane helix</keyword>
<sequence length="359" mass="38122">MRQIIIAAGIAILVSIMLTPVLIRVFSRQGFGQEIRDDGPQHHQKKRGTPSMGGVAILAGMWAGYFGSHLVGIAFGSDGPSASGLLVLALATMLGGVGFIDDFIKIRKARNLGLNKTSKTVGQILSALVFGVLVLQFRNTDGLTPGSPQLSYVREIATVAMPAAIFVLFCVILVMSWSNAVNFTDGLDGLAGGCMAMVTGAYVIVTFWQYRNACSTHPGIACYNVRDPLDLAVIAAATAGACIGFLWWNAAPAKIFMGDTGSLALGGVIAGLSVTTRTELLAVVLGALFVAEIVSVVLQIAAFRTTGRRVFRMAPFHHHFELLGWAETTVIIRFWLLTAIACGLGLALFYGEWLATIGD</sequence>
<proteinExistence type="inferred from homology"/>
<organism>
    <name type="scientific">Mycobacteroides abscessus (strain ATCC 19977 / DSM 44196 / CCUG 20993 / CIP 104536 / JCM 13569 / NCTC 13031 / TMC 1543 / L948)</name>
    <name type="common">Mycobacterium abscessus</name>
    <dbReference type="NCBI Taxonomy" id="561007"/>
    <lineage>
        <taxon>Bacteria</taxon>
        <taxon>Bacillati</taxon>
        <taxon>Actinomycetota</taxon>
        <taxon>Actinomycetes</taxon>
        <taxon>Mycobacteriales</taxon>
        <taxon>Mycobacteriaceae</taxon>
        <taxon>Mycobacteroides</taxon>
        <taxon>Mycobacteroides abscessus</taxon>
    </lineage>
</organism>
<comment type="function">
    <text evidence="1">Catalyzes the initial step of the lipid cycle reactions in the biosynthesis of the cell wall peptidoglycan: transfers peptidoglycan precursor phospho-MurNAc-pentapeptide from UDP-MurNAc-pentapeptide onto the lipid carrier undecaprenyl phosphate, yielding undecaprenyl-pyrophosphoryl-MurNAc-pentapeptide, known as lipid I.</text>
</comment>
<comment type="catalytic activity">
    <reaction evidence="1">
        <text>UDP-N-acetyl-alpha-D-muramoyl-L-alanyl-gamma-D-glutamyl-meso-2,6-diaminopimeloyl-D-alanyl-D-alanine + di-trans,octa-cis-undecaprenyl phosphate = di-trans,octa-cis-undecaprenyl diphospho-N-acetyl-alpha-D-muramoyl-L-alanyl-D-glutamyl-meso-2,6-diaminopimeloyl-D-alanyl-D-alanine + UMP</text>
        <dbReference type="Rhea" id="RHEA:28386"/>
        <dbReference type="ChEBI" id="CHEBI:57865"/>
        <dbReference type="ChEBI" id="CHEBI:60392"/>
        <dbReference type="ChEBI" id="CHEBI:61386"/>
        <dbReference type="ChEBI" id="CHEBI:61387"/>
        <dbReference type="EC" id="2.7.8.13"/>
    </reaction>
</comment>
<comment type="cofactor">
    <cofactor evidence="1">
        <name>Mg(2+)</name>
        <dbReference type="ChEBI" id="CHEBI:18420"/>
    </cofactor>
</comment>
<comment type="pathway">
    <text evidence="1">Cell wall biogenesis; peptidoglycan biosynthesis.</text>
</comment>
<comment type="subcellular location">
    <subcellularLocation>
        <location evidence="1">Cell membrane</location>
        <topology evidence="1">Multi-pass membrane protein</topology>
    </subcellularLocation>
</comment>
<comment type="similarity">
    <text evidence="1">Belongs to the glycosyltransferase 4 family. MraY subfamily.</text>
</comment>
<name>MRAY_MYCA9</name>
<gene>
    <name evidence="1" type="primary">mraY</name>
    <name type="ordered locus">MAB_2003</name>
</gene>